<sequence>MPGIKVFGETVLRGSVRVSGAKNATTKLLVASLLSDQRTILKNVPNIEDVRQTVDLCRVLGAIVEWDQQAQVIEIHTPRILLSKVPPQFSCVNRIPILLLGALLRRCPYGIFVPILGGDAIGPRTLHFHLEGLKKLGAEIVISDEGYWASAPNGLVGAHITLPYPSVGATENLILASVGAQGRTIIKNAALEVEIIDLIVFLQKAGVEITTDNDKTIEIFGCQDFYSVEHSIIPDKIEAASFGMAAVVSQGRIFVEQARHEHMIPFLKVLRSIGGGFSVHENGIEFFYDKPLKGGVLLETDVHPGFITDWQQPFAVLLSQSEGCSVIHETVHENRLGYLKGLVKMGAHCDLFHECLSAKSCRYSTGNHPHSAVIHGPTPLQATDLVIPDLRAGFAYVMAALIAEGGASWIENTEMLDRGYTDWRGKLERLGAKVLARDSVSVYV</sequence>
<reference key="1">
    <citation type="journal article" date="1998" name="Science">
        <title>Genome sequence of an obligate intracellular pathogen of humans: Chlamydia trachomatis.</title>
        <authorList>
            <person name="Stephens R.S."/>
            <person name="Kalman S."/>
            <person name="Lammel C.J."/>
            <person name="Fan J."/>
            <person name="Marathe R."/>
            <person name="Aravind L."/>
            <person name="Mitchell W.P."/>
            <person name="Olinger L."/>
            <person name="Tatusov R.L."/>
            <person name="Zhao Q."/>
            <person name="Koonin E.V."/>
            <person name="Davis R.W."/>
        </authorList>
    </citation>
    <scope>NUCLEOTIDE SEQUENCE [LARGE SCALE GENOMIC DNA]</scope>
    <source>
        <strain>ATCC VR-885 / DSM 19411 / UW-3/Cx</strain>
    </source>
</reference>
<feature type="chain" id="PRO_0000178862" description="UDP-N-acetylglucosamine 1-carboxyvinyltransferase">
    <location>
        <begin position="1"/>
        <end position="444"/>
    </location>
</feature>
<feature type="active site" description="Proton donor" evidence="1">
    <location>
        <position position="119"/>
    </location>
</feature>
<feature type="binding site" evidence="1">
    <location>
        <begin position="22"/>
        <end position="23"/>
    </location>
    <ligand>
        <name>phosphoenolpyruvate</name>
        <dbReference type="ChEBI" id="CHEBI:58702"/>
    </ligand>
</feature>
<feature type="binding site" evidence="1">
    <location>
        <position position="94"/>
    </location>
    <ligand>
        <name>UDP-N-acetyl-alpha-D-glucosamine</name>
        <dbReference type="ChEBI" id="CHEBI:57705"/>
    </ligand>
</feature>
<feature type="binding site" evidence="1">
    <location>
        <position position="309"/>
    </location>
    <ligand>
        <name>UDP-N-acetyl-alpha-D-glucosamine</name>
        <dbReference type="ChEBI" id="CHEBI:57705"/>
    </ligand>
</feature>
<feature type="binding site" evidence="1">
    <location>
        <position position="331"/>
    </location>
    <ligand>
        <name>UDP-N-acetyl-alpha-D-glucosamine</name>
        <dbReference type="ChEBI" id="CHEBI:57705"/>
    </ligand>
</feature>
<name>MURA_CHLTR</name>
<keyword id="KW-0131">Cell cycle</keyword>
<keyword id="KW-0132">Cell division</keyword>
<keyword id="KW-0133">Cell shape</keyword>
<keyword id="KW-0961">Cell wall biogenesis/degradation</keyword>
<keyword id="KW-0963">Cytoplasm</keyword>
<keyword id="KW-0573">Peptidoglycan synthesis</keyword>
<keyword id="KW-1185">Reference proteome</keyword>
<keyword id="KW-0808">Transferase</keyword>
<dbReference type="EC" id="2.5.1.7" evidence="1"/>
<dbReference type="EMBL" id="AE001273">
    <property type="protein sequence ID" value="AAC68055.1"/>
    <property type="molecule type" value="Genomic_DNA"/>
</dbReference>
<dbReference type="PIR" id="B71513">
    <property type="entry name" value="B71513"/>
</dbReference>
<dbReference type="RefSeq" id="NP_219968.1">
    <property type="nucleotide sequence ID" value="NC_000117.1"/>
</dbReference>
<dbReference type="RefSeq" id="WP_009871813.1">
    <property type="nucleotide sequence ID" value="NC_000117.1"/>
</dbReference>
<dbReference type="SMR" id="O84461"/>
<dbReference type="FunCoup" id="O84461">
    <property type="interactions" value="197"/>
</dbReference>
<dbReference type="STRING" id="272561.CT_455"/>
<dbReference type="EnsemblBacteria" id="AAC68055">
    <property type="protein sequence ID" value="AAC68055"/>
    <property type="gene ID" value="CT_455"/>
</dbReference>
<dbReference type="GeneID" id="884228"/>
<dbReference type="KEGG" id="ctr:CT_455"/>
<dbReference type="PATRIC" id="fig|272561.5.peg.492"/>
<dbReference type="HOGENOM" id="CLU_027387_0_0_0"/>
<dbReference type="InParanoid" id="O84461"/>
<dbReference type="OrthoDB" id="9803760at2"/>
<dbReference type="UniPathway" id="UPA00219"/>
<dbReference type="Proteomes" id="UP000000431">
    <property type="component" value="Chromosome"/>
</dbReference>
<dbReference type="GO" id="GO:0005737">
    <property type="term" value="C:cytoplasm"/>
    <property type="evidence" value="ECO:0007669"/>
    <property type="project" value="UniProtKB-SubCell"/>
</dbReference>
<dbReference type="GO" id="GO:0008760">
    <property type="term" value="F:UDP-N-acetylglucosamine 1-carboxyvinyltransferase activity"/>
    <property type="evidence" value="ECO:0007669"/>
    <property type="project" value="UniProtKB-UniRule"/>
</dbReference>
<dbReference type="GO" id="GO:0051301">
    <property type="term" value="P:cell division"/>
    <property type="evidence" value="ECO:0007669"/>
    <property type="project" value="UniProtKB-KW"/>
</dbReference>
<dbReference type="GO" id="GO:0071555">
    <property type="term" value="P:cell wall organization"/>
    <property type="evidence" value="ECO:0007669"/>
    <property type="project" value="UniProtKB-KW"/>
</dbReference>
<dbReference type="GO" id="GO:0009252">
    <property type="term" value="P:peptidoglycan biosynthetic process"/>
    <property type="evidence" value="ECO:0007669"/>
    <property type="project" value="UniProtKB-UniRule"/>
</dbReference>
<dbReference type="GO" id="GO:0008360">
    <property type="term" value="P:regulation of cell shape"/>
    <property type="evidence" value="ECO:0007669"/>
    <property type="project" value="UniProtKB-KW"/>
</dbReference>
<dbReference type="GO" id="GO:0019277">
    <property type="term" value="P:UDP-N-acetylgalactosamine biosynthetic process"/>
    <property type="evidence" value="ECO:0007669"/>
    <property type="project" value="InterPro"/>
</dbReference>
<dbReference type="CDD" id="cd01555">
    <property type="entry name" value="UdpNAET"/>
    <property type="match status" value="1"/>
</dbReference>
<dbReference type="Gene3D" id="3.65.10.10">
    <property type="entry name" value="Enolpyruvate transferase domain"/>
    <property type="match status" value="2"/>
</dbReference>
<dbReference type="HAMAP" id="MF_00111">
    <property type="entry name" value="MurA"/>
    <property type="match status" value="1"/>
</dbReference>
<dbReference type="InterPro" id="IPR001986">
    <property type="entry name" value="Enolpyruvate_Tfrase_dom"/>
</dbReference>
<dbReference type="InterPro" id="IPR036968">
    <property type="entry name" value="Enolpyruvate_Tfrase_sf"/>
</dbReference>
<dbReference type="InterPro" id="IPR050068">
    <property type="entry name" value="MurA_subfamily"/>
</dbReference>
<dbReference type="InterPro" id="IPR013792">
    <property type="entry name" value="RNA3'P_cycl/enolpyr_Trfase_a/b"/>
</dbReference>
<dbReference type="InterPro" id="IPR005750">
    <property type="entry name" value="UDP_GlcNAc_COvinyl_MurA"/>
</dbReference>
<dbReference type="NCBIfam" id="TIGR01072">
    <property type="entry name" value="murA"/>
    <property type="match status" value="1"/>
</dbReference>
<dbReference type="NCBIfam" id="NF006873">
    <property type="entry name" value="PRK09369.1"/>
    <property type="match status" value="1"/>
</dbReference>
<dbReference type="PANTHER" id="PTHR43783">
    <property type="entry name" value="UDP-N-ACETYLGLUCOSAMINE 1-CARBOXYVINYLTRANSFERASE"/>
    <property type="match status" value="1"/>
</dbReference>
<dbReference type="PANTHER" id="PTHR43783:SF1">
    <property type="entry name" value="UDP-N-ACETYLGLUCOSAMINE 1-CARBOXYVINYLTRANSFERASE"/>
    <property type="match status" value="1"/>
</dbReference>
<dbReference type="Pfam" id="PF00275">
    <property type="entry name" value="EPSP_synthase"/>
    <property type="match status" value="1"/>
</dbReference>
<dbReference type="SUPFAM" id="SSF55205">
    <property type="entry name" value="EPT/RTPC-like"/>
    <property type="match status" value="1"/>
</dbReference>
<protein>
    <recommendedName>
        <fullName evidence="1">UDP-N-acetylglucosamine 1-carboxyvinyltransferase</fullName>
        <ecNumber evidence="1">2.5.1.7</ecNumber>
    </recommendedName>
    <alternativeName>
        <fullName evidence="1">Enoylpyruvate transferase</fullName>
    </alternativeName>
    <alternativeName>
        <fullName evidence="1">UDP-N-acetylglucosamine enolpyruvyl transferase</fullName>
        <shortName evidence="1">EPT</shortName>
    </alternativeName>
</protein>
<accession>O84461</accession>
<evidence type="ECO:0000255" key="1">
    <source>
        <dbReference type="HAMAP-Rule" id="MF_00111"/>
    </source>
</evidence>
<proteinExistence type="inferred from homology"/>
<organism>
    <name type="scientific">Chlamydia trachomatis serovar D (strain ATCC VR-885 / DSM 19411 / UW-3/Cx)</name>
    <dbReference type="NCBI Taxonomy" id="272561"/>
    <lineage>
        <taxon>Bacteria</taxon>
        <taxon>Pseudomonadati</taxon>
        <taxon>Chlamydiota</taxon>
        <taxon>Chlamydiia</taxon>
        <taxon>Chlamydiales</taxon>
        <taxon>Chlamydiaceae</taxon>
        <taxon>Chlamydia/Chlamydophila group</taxon>
        <taxon>Chlamydia</taxon>
    </lineage>
</organism>
<comment type="function">
    <text evidence="1">Cell wall formation. Adds enolpyruvyl to UDP-N-acetylglucosamine.</text>
</comment>
<comment type="catalytic activity">
    <reaction evidence="1">
        <text>phosphoenolpyruvate + UDP-N-acetyl-alpha-D-glucosamine = UDP-N-acetyl-3-O-(1-carboxyvinyl)-alpha-D-glucosamine + phosphate</text>
        <dbReference type="Rhea" id="RHEA:18681"/>
        <dbReference type="ChEBI" id="CHEBI:43474"/>
        <dbReference type="ChEBI" id="CHEBI:57705"/>
        <dbReference type="ChEBI" id="CHEBI:58702"/>
        <dbReference type="ChEBI" id="CHEBI:68483"/>
        <dbReference type="EC" id="2.5.1.7"/>
    </reaction>
</comment>
<comment type="pathway">
    <text evidence="1">Cell wall biogenesis; peptidoglycan biosynthesis.</text>
</comment>
<comment type="subcellular location">
    <subcellularLocation>
        <location evidence="1">Cytoplasm</location>
    </subcellularLocation>
</comment>
<comment type="similarity">
    <text evidence="1">Belongs to the EPSP synthase family. MurA subfamily.</text>
</comment>
<gene>
    <name evidence="1" type="primary">murA</name>
    <name type="ordered locus">CT_455</name>
</gene>